<comment type="function">
    <text evidence="1">Redox regulated molecular chaperone. Protects both thermally unfolding and oxidatively damaged proteins from irreversible aggregation. Plays an important role in the bacterial defense system toward oxidative stress.</text>
</comment>
<comment type="subcellular location">
    <subcellularLocation>
        <location evidence="1">Cytoplasm</location>
    </subcellularLocation>
</comment>
<comment type="PTM">
    <text evidence="1">Under oxidizing conditions two disulfide bonds are formed involving the reactive cysteines. Under reducing conditions zinc is bound to the reactive cysteines and the protein is inactive.</text>
</comment>
<comment type="similarity">
    <text evidence="1">Belongs to the HSP33 family.</text>
</comment>
<accession>A8MIA8</accession>
<dbReference type="EMBL" id="CP000853">
    <property type="protein sequence ID" value="ABW19540.1"/>
    <property type="molecule type" value="Genomic_DNA"/>
</dbReference>
<dbReference type="RefSeq" id="WP_012159849.1">
    <property type="nucleotide sequence ID" value="NC_009922.1"/>
</dbReference>
<dbReference type="SMR" id="A8MIA8"/>
<dbReference type="STRING" id="350688.Clos_2003"/>
<dbReference type="KEGG" id="aoe:Clos_2003"/>
<dbReference type="eggNOG" id="COG1281">
    <property type="taxonomic scope" value="Bacteria"/>
</dbReference>
<dbReference type="HOGENOM" id="CLU_054493_1_0_9"/>
<dbReference type="OrthoDB" id="9776534at2"/>
<dbReference type="Proteomes" id="UP000000269">
    <property type="component" value="Chromosome"/>
</dbReference>
<dbReference type="GO" id="GO:0005737">
    <property type="term" value="C:cytoplasm"/>
    <property type="evidence" value="ECO:0007669"/>
    <property type="project" value="UniProtKB-SubCell"/>
</dbReference>
<dbReference type="GO" id="GO:0044183">
    <property type="term" value="F:protein folding chaperone"/>
    <property type="evidence" value="ECO:0007669"/>
    <property type="project" value="TreeGrafter"/>
</dbReference>
<dbReference type="GO" id="GO:0051082">
    <property type="term" value="F:unfolded protein binding"/>
    <property type="evidence" value="ECO:0007669"/>
    <property type="project" value="UniProtKB-UniRule"/>
</dbReference>
<dbReference type="GO" id="GO:0042026">
    <property type="term" value="P:protein refolding"/>
    <property type="evidence" value="ECO:0007669"/>
    <property type="project" value="TreeGrafter"/>
</dbReference>
<dbReference type="CDD" id="cd00498">
    <property type="entry name" value="Hsp33"/>
    <property type="match status" value="1"/>
</dbReference>
<dbReference type="Gene3D" id="3.55.30.10">
    <property type="entry name" value="Hsp33 domain"/>
    <property type="match status" value="1"/>
</dbReference>
<dbReference type="Gene3D" id="3.90.1280.10">
    <property type="entry name" value="HSP33 redox switch-like"/>
    <property type="match status" value="1"/>
</dbReference>
<dbReference type="HAMAP" id="MF_00117">
    <property type="entry name" value="HslO"/>
    <property type="match status" value="1"/>
</dbReference>
<dbReference type="InterPro" id="IPR000397">
    <property type="entry name" value="Heat_shock_Hsp33"/>
</dbReference>
<dbReference type="InterPro" id="IPR016154">
    <property type="entry name" value="Heat_shock_Hsp33_C"/>
</dbReference>
<dbReference type="InterPro" id="IPR016153">
    <property type="entry name" value="Heat_shock_Hsp33_N"/>
</dbReference>
<dbReference type="NCBIfam" id="NF001033">
    <property type="entry name" value="PRK00114.1"/>
    <property type="match status" value="1"/>
</dbReference>
<dbReference type="PANTHER" id="PTHR30111">
    <property type="entry name" value="33 KDA CHAPERONIN"/>
    <property type="match status" value="1"/>
</dbReference>
<dbReference type="PANTHER" id="PTHR30111:SF1">
    <property type="entry name" value="33 KDA CHAPERONIN"/>
    <property type="match status" value="1"/>
</dbReference>
<dbReference type="Pfam" id="PF01430">
    <property type="entry name" value="HSP33"/>
    <property type="match status" value="1"/>
</dbReference>
<dbReference type="PIRSF" id="PIRSF005261">
    <property type="entry name" value="Heat_shock_Hsp33"/>
    <property type="match status" value="1"/>
</dbReference>
<dbReference type="SUPFAM" id="SSF64397">
    <property type="entry name" value="Hsp33 domain"/>
    <property type="match status" value="1"/>
</dbReference>
<dbReference type="SUPFAM" id="SSF118352">
    <property type="entry name" value="HSP33 redox switch-like"/>
    <property type="match status" value="1"/>
</dbReference>
<organism>
    <name type="scientific">Alkaliphilus oremlandii (strain OhILAs)</name>
    <name type="common">Clostridium oremlandii (strain OhILAs)</name>
    <dbReference type="NCBI Taxonomy" id="350688"/>
    <lineage>
        <taxon>Bacteria</taxon>
        <taxon>Bacillati</taxon>
        <taxon>Bacillota</taxon>
        <taxon>Clostridia</taxon>
        <taxon>Peptostreptococcales</taxon>
        <taxon>Natronincolaceae</taxon>
        <taxon>Alkaliphilus</taxon>
    </lineage>
</organism>
<proteinExistence type="inferred from homology"/>
<reference key="1">
    <citation type="submission" date="2007-10" db="EMBL/GenBank/DDBJ databases">
        <title>Complete genome of Alkaliphilus oremlandii OhILAs.</title>
        <authorList>
            <person name="Copeland A."/>
            <person name="Lucas S."/>
            <person name="Lapidus A."/>
            <person name="Barry K."/>
            <person name="Detter J.C."/>
            <person name="Glavina del Rio T."/>
            <person name="Hammon N."/>
            <person name="Israni S."/>
            <person name="Dalin E."/>
            <person name="Tice H."/>
            <person name="Pitluck S."/>
            <person name="Chain P."/>
            <person name="Malfatti S."/>
            <person name="Shin M."/>
            <person name="Vergez L."/>
            <person name="Schmutz J."/>
            <person name="Larimer F."/>
            <person name="Land M."/>
            <person name="Hauser L."/>
            <person name="Kyrpides N."/>
            <person name="Mikhailova N."/>
            <person name="Stolz J.F."/>
            <person name="Dawson A."/>
            <person name="Fisher E."/>
            <person name="Crable B."/>
            <person name="Perera E."/>
            <person name="Lisak J."/>
            <person name="Ranganathan M."/>
            <person name="Basu P."/>
            <person name="Richardson P."/>
        </authorList>
    </citation>
    <scope>NUCLEOTIDE SEQUENCE [LARGE SCALE GENOMIC DNA]</scope>
    <source>
        <strain>OhILAs</strain>
    </source>
</reference>
<evidence type="ECO:0000255" key="1">
    <source>
        <dbReference type="HAMAP-Rule" id="MF_00117"/>
    </source>
</evidence>
<gene>
    <name evidence="1" type="primary">hslO</name>
    <name type="ordered locus">Clos_2003</name>
</gene>
<keyword id="KW-0143">Chaperone</keyword>
<keyword id="KW-0963">Cytoplasm</keyword>
<keyword id="KW-1015">Disulfide bond</keyword>
<keyword id="KW-0676">Redox-active center</keyword>
<keyword id="KW-1185">Reference proteome</keyword>
<keyword id="KW-0862">Zinc</keyword>
<sequence length="299" mass="32613">MKNTVIRGTAASNQIRVFVANTTEMVAKAQELQMATPVAIAALGRTLTATSMMGLMSKSEKEKITVNINGGGPLGPIVVVGNSKGIVKGYVSHPHVEGSNLYPGKLDVGSAVGTDGTITVVKDLGLKEPYIGTYPLSTGEIAEDFAAYFAFSEQQPSGIALGVLVDVDYTIKAAGGYIIQVLPNIEEETLTKLESKLSTLEPITSIIDRIQDPEEILNHILGEFEPVILETYDVDFVCDCSEERLEQVLISIGEKELTEIIEEDKQAELVCHFCNKKYHFDEEHLNKLRSEILNKNNNI</sequence>
<feature type="chain" id="PRO_1000057783" description="33 kDa chaperonin">
    <location>
        <begin position="1"/>
        <end position="299"/>
    </location>
</feature>
<feature type="disulfide bond" description="Redox-active" evidence="1">
    <location>
        <begin position="238"/>
        <end position="240"/>
    </location>
</feature>
<feature type="disulfide bond" description="Redox-active" evidence="1">
    <location>
        <begin position="271"/>
        <end position="274"/>
    </location>
</feature>
<name>HSLO_ALKOO</name>
<protein>
    <recommendedName>
        <fullName evidence="1">33 kDa chaperonin</fullName>
    </recommendedName>
    <alternativeName>
        <fullName evidence="1">Heat shock protein 33 homolog</fullName>
        <shortName evidence="1">HSP33</shortName>
    </alternativeName>
</protein>